<comment type="function">
    <text evidence="1">Catalyzes the first step in hexosamine metabolism, converting fructose-6P into glucosamine-6P using glutamine as a nitrogen source.</text>
</comment>
<comment type="catalytic activity">
    <reaction evidence="1">
        <text>D-fructose 6-phosphate + L-glutamine = D-glucosamine 6-phosphate + L-glutamate</text>
        <dbReference type="Rhea" id="RHEA:13237"/>
        <dbReference type="ChEBI" id="CHEBI:29985"/>
        <dbReference type="ChEBI" id="CHEBI:58359"/>
        <dbReference type="ChEBI" id="CHEBI:58725"/>
        <dbReference type="ChEBI" id="CHEBI:61527"/>
        <dbReference type="EC" id="2.6.1.16"/>
    </reaction>
</comment>
<comment type="subunit">
    <text evidence="1">Homodimer.</text>
</comment>
<comment type="subcellular location">
    <subcellularLocation>
        <location evidence="1">Cytoplasm</location>
    </subcellularLocation>
</comment>
<name>GLMS_STRPQ</name>
<accession>P0DB33</accession>
<accession>Q878N9</accession>
<accession>Q8K7A4</accession>
<organism>
    <name type="scientific">Streptococcus pyogenes serotype M3 (strain SSI-1)</name>
    <dbReference type="NCBI Taxonomy" id="193567"/>
    <lineage>
        <taxon>Bacteria</taxon>
        <taxon>Bacillati</taxon>
        <taxon>Bacillota</taxon>
        <taxon>Bacilli</taxon>
        <taxon>Lactobacillales</taxon>
        <taxon>Streptococcaceae</taxon>
        <taxon>Streptococcus</taxon>
    </lineage>
</organism>
<feature type="initiator methionine" description="Removed" evidence="1">
    <location>
        <position position="1"/>
    </location>
</feature>
<feature type="chain" id="PRO_0000411354" description="Glutamine--fructose-6-phosphate aminotransferase [isomerizing]">
    <location>
        <begin position="2"/>
        <end position="604"/>
    </location>
</feature>
<feature type="domain" description="Glutamine amidotransferase type-2" evidence="1">
    <location>
        <begin position="2"/>
        <end position="218"/>
    </location>
</feature>
<feature type="domain" description="SIS 1" evidence="1">
    <location>
        <begin position="284"/>
        <end position="423"/>
    </location>
</feature>
<feature type="domain" description="SIS 2" evidence="1">
    <location>
        <begin position="452"/>
        <end position="594"/>
    </location>
</feature>
<feature type="active site" description="Nucleophile; for GATase activity" evidence="1">
    <location>
        <position position="2"/>
    </location>
</feature>
<feature type="active site" description="For Fru-6P isomerization activity" evidence="1">
    <location>
        <position position="599"/>
    </location>
</feature>
<gene>
    <name evidence="1" type="primary">glmS</name>
    <name type="ordered locus">SPs1109</name>
</gene>
<keyword id="KW-0032">Aminotransferase</keyword>
<keyword id="KW-0963">Cytoplasm</keyword>
<keyword id="KW-0315">Glutamine amidotransferase</keyword>
<keyword id="KW-0677">Repeat</keyword>
<keyword id="KW-0808">Transferase</keyword>
<sequence>MCGIVGVVGNRNATDILMQGLEKLEYRGYDSAGIFVANANQTNLIKSVGRIADLRAKIGIDVAGSTGIGHTRWATHGQSTEDNAHPHTSQTGRFVLVHNGVIENYLHIKTEFLAGHDFKGQTDTEIAVHLIGKFVEEDKLSVLEAFKKALSIIEGSYAFALMDSQATDTIYVAKNKSPLLIGLGEGYNMVCSDAMAMIRETSEFMEIHDKELVILTKDKVTVTDYDGKELIRDSYTAELDLSDIGKGTYPFYMLKEIDEQPTVMRQLISTYADETGNVQVDPAIITSIQEADRLYILAAGTSYHAGFATKNMLEQLTDTPVELGVASEWGYHMPLLSKKPMFILLSQSGETADSRQVLVKANAMGIPSLTVTNVPGSTLSRESTYTMLIHAGPEIAVASTKAYTAQIAALAFLAKAVGEANGKQEALDFNLVHELSLVAQSIEATLSEKDLVAEKVQALLTTTRNAFYIGRGNDYYVAMEAALKLKEISYIQCEGFAAGELKHGTISLIEEDTPVIALISSSQLVASHTRGNIQEVAARGAHVLTVVEEGLDREGDDIIVNKVHPFLAPIAMVIPTQLIAYYASLQRGLDVDKPRNLAKAVTVE</sequence>
<protein>
    <recommendedName>
        <fullName evidence="1">Glutamine--fructose-6-phosphate aminotransferase [isomerizing]</fullName>
        <ecNumber evidence="1">2.6.1.16</ecNumber>
    </recommendedName>
    <alternativeName>
        <fullName evidence="1">D-fructose-6-phosphate amidotransferase</fullName>
    </alternativeName>
    <alternativeName>
        <fullName evidence="1">GFAT</fullName>
    </alternativeName>
    <alternativeName>
        <fullName evidence="1">Glucosamine-6-phosphate synthase</fullName>
    </alternativeName>
    <alternativeName>
        <fullName evidence="1">Hexosephosphate aminotransferase</fullName>
    </alternativeName>
    <alternativeName>
        <fullName evidence="1">L-glutamine--D-fructose-6-phosphate amidotransferase</fullName>
    </alternativeName>
</protein>
<dbReference type="EC" id="2.6.1.16" evidence="1"/>
<dbReference type="EMBL" id="BA000034">
    <property type="protein sequence ID" value="BAC64204.1"/>
    <property type="molecule type" value="Genomic_DNA"/>
</dbReference>
<dbReference type="RefSeq" id="WP_002984451.1">
    <property type="nucleotide sequence ID" value="NC_004606.1"/>
</dbReference>
<dbReference type="SMR" id="P0DB33"/>
<dbReference type="MEROPS" id="C44.A08"/>
<dbReference type="KEGG" id="sps:SPs1109"/>
<dbReference type="HOGENOM" id="CLU_012520_7_1_9"/>
<dbReference type="GO" id="GO:0005829">
    <property type="term" value="C:cytosol"/>
    <property type="evidence" value="ECO:0007669"/>
    <property type="project" value="TreeGrafter"/>
</dbReference>
<dbReference type="GO" id="GO:0097367">
    <property type="term" value="F:carbohydrate derivative binding"/>
    <property type="evidence" value="ECO:0007669"/>
    <property type="project" value="InterPro"/>
</dbReference>
<dbReference type="GO" id="GO:0004360">
    <property type="term" value="F:glutamine-fructose-6-phosphate transaminase (isomerizing) activity"/>
    <property type="evidence" value="ECO:0007669"/>
    <property type="project" value="UniProtKB-UniRule"/>
</dbReference>
<dbReference type="GO" id="GO:0005975">
    <property type="term" value="P:carbohydrate metabolic process"/>
    <property type="evidence" value="ECO:0007669"/>
    <property type="project" value="UniProtKB-UniRule"/>
</dbReference>
<dbReference type="GO" id="GO:0006002">
    <property type="term" value="P:fructose 6-phosphate metabolic process"/>
    <property type="evidence" value="ECO:0007669"/>
    <property type="project" value="TreeGrafter"/>
</dbReference>
<dbReference type="GO" id="GO:0006487">
    <property type="term" value="P:protein N-linked glycosylation"/>
    <property type="evidence" value="ECO:0007669"/>
    <property type="project" value="TreeGrafter"/>
</dbReference>
<dbReference type="GO" id="GO:0006047">
    <property type="term" value="P:UDP-N-acetylglucosamine metabolic process"/>
    <property type="evidence" value="ECO:0007669"/>
    <property type="project" value="TreeGrafter"/>
</dbReference>
<dbReference type="CDD" id="cd00714">
    <property type="entry name" value="GFAT"/>
    <property type="match status" value="1"/>
</dbReference>
<dbReference type="CDD" id="cd05008">
    <property type="entry name" value="SIS_GlmS_GlmD_1"/>
    <property type="match status" value="1"/>
</dbReference>
<dbReference type="CDD" id="cd05009">
    <property type="entry name" value="SIS_GlmS_GlmD_2"/>
    <property type="match status" value="1"/>
</dbReference>
<dbReference type="FunFam" id="3.40.50.10490:FF:000001">
    <property type="entry name" value="Glutamine--fructose-6-phosphate aminotransferase [isomerizing]"/>
    <property type="match status" value="1"/>
</dbReference>
<dbReference type="FunFam" id="3.40.50.10490:FF:000022">
    <property type="entry name" value="Glutamine--fructose-6-phosphate aminotransferase [isomerizing]"/>
    <property type="match status" value="1"/>
</dbReference>
<dbReference type="FunFam" id="3.60.20.10:FF:000006">
    <property type="entry name" value="Glutamine--fructose-6-phosphate aminotransferase [isomerizing]"/>
    <property type="match status" value="1"/>
</dbReference>
<dbReference type="Gene3D" id="3.40.50.10490">
    <property type="entry name" value="Glucose-6-phosphate isomerase like protein, domain 1"/>
    <property type="match status" value="2"/>
</dbReference>
<dbReference type="Gene3D" id="3.60.20.10">
    <property type="entry name" value="Glutamine Phosphoribosylpyrophosphate, subunit 1, domain 1"/>
    <property type="match status" value="1"/>
</dbReference>
<dbReference type="HAMAP" id="MF_00164">
    <property type="entry name" value="GlmS"/>
    <property type="match status" value="1"/>
</dbReference>
<dbReference type="InterPro" id="IPR017932">
    <property type="entry name" value="GATase_2_dom"/>
</dbReference>
<dbReference type="InterPro" id="IPR005855">
    <property type="entry name" value="GFAT"/>
</dbReference>
<dbReference type="InterPro" id="IPR047084">
    <property type="entry name" value="GFAT_N"/>
</dbReference>
<dbReference type="InterPro" id="IPR035466">
    <property type="entry name" value="GlmS/AgaS_SIS"/>
</dbReference>
<dbReference type="InterPro" id="IPR035490">
    <property type="entry name" value="GlmS/FrlB_SIS"/>
</dbReference>
<dbReference type="InterPro" id="IPR029055">
    <property type="entry name" value="Ntn_hydrolases_N"/>
</dbReference>
<dbReference type="InterPro" id="IPR001347">
    <property type="entry name" value="SIS_dom"/>
</dbReference>
<dbReference type="InterPro" id="IPR046348">
    <property type="entry name" value="SIS_dom_sf"/>
</dbReference>
<dbReference type="NCBIfam" id="TIGR01135">
    <property type="entry name" value="glmS"/>
    <property type="match status" value="1"/>
</dbReference>
<dbReference type="NCBIfam" id="NF001484">
    <property type="entry name" value="PRK00331.1"/>
    <property type="match status" value="1"/>
</dbReference>
<dbReference type="PANTHER" id="PTHR10937">
    <property type="entry name" value="GLUCOSAMINE--FRUCTOSE-6-PHOSPHATE AMINOTRANSFERASE, ISOMERIZING"/>
    <property type="match status" value="1"/>
</dbReference>
<dbReference type="PANTHER" id="PTHR10937:SF0">
    <property type="entry name" value="GLUTAMINE--FRUCTOSE-6-PHOSPHATE TRANSAMINASE (ISOMERIZING)"/>
    <property type="match status" value="1"/>
</dbReference>
<dbReference type="Pfam" id="PF13522">
    <property type="entry name" value="GATase_6"/>
    <property type="match status" value="1"/>
</dbReference>
<dbReference type="Pfam" id="PF01380">
    <property type="entry name" value="SIS"/>
    <property type="match status" value="2"/>
</dbReference>
<dbReference type="SUPFAM" id="SSF56235">
    <property type="entry name" value="N-terminal nucleophile aminohydrolases (Ntn hydrolases)"/>
    <property type="match status" value="1"/>
</dbReference>
<dbReference type="SUPFAM" id="SSF53697">
    <property type="entry name" value="SIS domain"/>
    <property type="match status" value="1"/>
</dbReference>
<dbReference type="PROSITE" id="PS51278">
    <property type="entry name" value="GATASE_TYPE_2"/>
    <property type="match status" value="1"/>
</dbReference>
<dbReference type="PROSITE" id="PS51464">
    <property type="entry name" value="SIS"/>
    <property type="match status" value="2"/>
</dbReference>
<evidence type="ECO:0000255" key="1">
    <source>
        <dbReference type="HAMAP-Rule" id="MF_00164"/>
    </source>
</evidence>
<reference key="1">
    <citation type="journal article" date="2003" name="Genome Res.">
        <title>Genome sequence of an M3 strain of Streptococcus pyogenes reveals a large-scale genomic rearrangement in invasive strains and new insights into phage evolution.</title>
        <authorList>
            <person name="Nakagawa I."/>
            <person name="Kurokawa K."/>
            <person name="Yamashita A."/>
            <person name="Nakata M."/>
            <person name="Tomiyasu Y."/>
            <person name="Okahashi N."/>
            <person name="Kawabata S."/>
            <person name="Yamazaki K."/>
            <person name="Shiba T."/>
            <person name="Yasunaga T."/>
            <person name="Hayashi H."/>
            <person name="Hattori M."/>
            <person name="Hamada S."/>
        </authorList>
    </citation>
    <scope>NUCLEOTIDE SEQUENCE [LARGE SCALE GENOMIC DNA]</scope>
    <source>
        <strain>SSI-1</strain>
    </source>
</reference>
<proteinExistence type="inferred from homology"/>